<sequence length="298" mass="33280">MQLLKASDIISHLQIDGIFPGGNAIPCTHLNNYMNIKEKQLMNTIADVQSSRDLRNLPINQVGIKDLRFPITLQTAEGIQSTIARLTMTVYLPAEQKGTHMSRFVALMEQHAEALDFAQLRKLTTEMVALLDSRAGKISVSFPFFRKKTAPVSGIRSLLDYDVCLTGEIKDGAYGHSMKVMIPVTSLCPCSKEISQYGAHNQRSHVTVSLTADAEVGIEEVIDYVEAQASCQLYGLLKRPDEKYVTEKAYENPKFVEDMVRDVATSLIADKRIKSFVVESENFESIHNHSAYAYIAYP</sequence>
<organism>
    <name type="scientific">Neisseria meningitidis serogroup B (strain ATCC BAA-335 / MC58)</name>
    <dbReference type="NCBI Taxonomy" id="122586"/>
    <lineage>
        <taxon>Bacteria</taxon>
        <taxon>Pseudomonadati</taxon>
        <taxon>Pseudomonadota</taxon>
        <taxon>Betaproteobacteria</taxon>
        <taxon>Neisseriales</taxon>
        <taxon>Neisseriaceae</taxon>
        <taxon>Neisseria</taxon>
    </lineage>
</organism>
<gene>
    <name evidence="1" type="primary">folE2</name>
    <name type="ordered locus">NMB0803</name>
</gene>
<proteinExistence type="inferred from homology"/>
<feature type="chain" id="PRO_0000147716" description="GTP cyclohydrolase FolE2">
    <location>
        <begin position="1"/>
        <end position="298"/>
    </location>
</feature>
<feature type="site" description="May be catalytically important" evidence="1">
    <location>
        <position position="188"/>
    </location>
</feature>
<accession>Q9K023</accession>
<protein>
    <recommendedName>
        <fullName evidence="1">GTP cyclohydrolase FolE2</fullName>
        <ecNumber evidence="1">3.5.4.16</ecNumber>
    </recommendedName>
</protein>
<comment type="function">
    <text evidence="1">Converts GTP to 7,8-dihydroneopterin triphosphate.</text>
</comment>
<comment type="catalytic activity">
    <reaction evidence="1">
        <text>GTP + H2O = 7,8-dihydroneopterin 3'-triphosphate + formate + H(+)</text>
        <dbReference type="Rhea" id="RHEA:17473"/>
        <dbReference type="ChEBI" id="CHEBI:15377"/>
        <dbReference type="ChEBI" id="CHEBI:15378"/>
        <dbReference type="ChEBI" id="CHEBI:15740"/>
        <dbReference type="ChEBI" id="CHEBI:37565"/>
        <dbReference type="ChEBI" id="CHEBI:58462"/>
        <dbReference type="EC" id="3.5.4.16"/>
    </reaction>
</comment>
<comment type="pathway">
    <text evidence="1">Cofactor biosynthesis; 7,8-dihydroneopterin triphosphate biosynthesis; 7,8-dihydroneopterin triphosphate from GTP: step 1/1.</text>
</comment>
<comment type="similarity">
    <text evidence="1">Belongs to the GTP cyclohydrolase IV family.</text>
</comment>
<comment type="sequence caution" evidence="2">
    <conflict type="erroneous initiation">
        <sequence resource="EMBL-CDS" id="AAF41216"/>
    </conflict>
</comment>
<name>GCH4_NEIMB</name>
<evidence type="ECO:0000255" key="1">
    <source>
        <dbReference type="HAMAP-Rule" id="MF_01527"/>
    </source>
</evidence>
<evidence type="ECO:0000305" key="2"/>
<keyword id="KW-0378">Hydrolase</keyword>
<keyword id="KW-1185">Reference proteome</keyword>
<dbReference type="EC" id="3.5.4.16" evidence="1"/>
<dbReference type="EMBL" id="AE002098">
    <property type="protein sequence ID" value="AAF41216.1"/>
    <property type="status" value="ALT_INIT"/>
    <property type="molecule type" value="Genomic_DNA"/>
</dbReference>
<dbReference type="PIR" id="B81155">
    <property type="entry name" value="B81155"/>
</dbReference>
<dbReference type="RefSeq" id="NP_273845.1">
    <property type="nucleotide sequence ID" value="NC_003112.2"/>
</dbReference>
<dbReference type="SMR" id="Q9K023"/>
<dbReference type="STRING" id="122586.NMB0803"/>
<dbReference type="PaxDb" id="122586-NMB0803"/>
<dbReference type="KEGG" id="nme:NMB0803"/>
<dbReference type="PATRIC" id="fig|122586.8.peg.1015"/>
<dbReference type="HOGENOM" id="CLU_062816_1_1_4"/>
<dbReference type="InParanoid" id="Q9K023"/>
<dbReference type="OrthoDB" id="9774824at2"/>
<dbReference type="UniPathway" id="UPA00848">
    <property type="reaction ID" value="UER00151"/>
</dbReference>
<dbReference type="Proteomes" id="UP000000425">
    <property type="component" value="Chromosome"/>
</dbReference>
<dbReference type="GO" id="GO:0003933">
    <property type="term" value="F:GTP cyclohydrolase activity"/>
    <property type="evidence" value="ECO:0000318"/>
    <property type="project" value="GO_Central"/>
</dbReference>
<dbReference type="GO" id="GO:0003934">
    <property type="term" value="F:GTP cyclohydrolase I activity"/>
    <property type="evidence" value="ECO:0007669"/>
    <property type="project" value="UniProtKB-UniRule"/>
</dbReference>
<dbReference type="GO" id="GO:0046654">
    <property type="term" value="P:tetrahydrofolate biosynthetic process"/>
    <property type="evidence" value="ECO:0007669"/>
    <property type="project" value="UniProtKB-UniRule"/>
</dbReference>
<dbReference type="Gene3D" id="3.10.270.10">
    <property type="entry name" value="Urate Oxidase"/>
    <property type="match status" value="1"/>
</dbReference>
<dbReference type="HAMAP" id="MF_01527_B">
    <property type="entry name" value="GTP_cyclohydrol_B"/>
    <property type="match status" value="1"/>
</dbReference>
<dbReference type="InterPro" id="IPR022838">
    <property type="entry name" value="GTP_cyclohydrolase_FolE2"/>
</dbReference>
<dbReference type="InterPro" id="IPR003801">
    <property type="entry name" value="GTP_cyclohydrolase_FolE2/MptA"/>
</dbReference>
<dbReference type="NCBIfam" id="NF010200">
    <property type="entry name" value="PRK13674.1-1"/>
    <property type="match status" value="1"/>
</dbReference>
<dbReference type="PANTHER" id="PTHR36445">
    <property type="entry name" value="GTP CYCLOHYDROLASE MPTA"/>
    <property type="match status" value="1"/>
</dbReference>
<dbReference type="PANTHER" id="PTHR36445:SF1">
    <property type="entry name" value="GTP CYCLOHYDROLASE MPTA"/>
    <property type="match status" value="1"/>
</dbReference>
<dbReference type="Pfam" id="PF02649">
    <property type="entry name" value="GCHY-1"/>
    <property type="match status" value="1"/>
</dbReference>
<reference key="1">
    <citation type="journal article" date="2000" name="Science">
        <title>Complete genome sequence of Neisseria meningitidis serogroup B strain MC58.</title>
        <authorList>
            <person name="Tettelin H."/>
            <person name="Saunders N.J."/>
            <person name="Heidelberg J.F."/>
            <person name="Jeffries A.C."/>
            <person name="Nelson K.E."/>
            <person name="Eisen J.A."/>
            <person name="Ketchum K.A."/>
            <person name="Hood D.W."/>
            <person name="Peden J.F."/>
            <person name="Dodson R.J."/>
            <person name="Nelson W.C."/>
            <person name="Gwinn M.L."/>
            <person name="DeBoy R.T."/>
            <person name="Peterson J.D."/>
            <person name="Hickey E.K."/>
            <person name="Haft D.H."/>
            <person name="Salzberg S.L."/>
            <person name="White O."/>
            <person name="Fleischmann R.D."/>
            <person name="Dougherty B.A."/>
            <person name="Mason T.M."/>
            <person name="Ciecko A."/>
            <person name="Parksey D.S."/>
            <person name="Blair E."/>
            <person name="Cittone H."/>
            <person name="Clark E.B."/>
            <person name="Cotton M.D."/>
            <person name="Utterback T.R."/>
            <person name="Khouri H.M."/>
            <person name="Qin H."/>
            <person name="Vamathevan J.J."/>
            <person name="Gill J."/>
            <person name="Scarlato V."/>
            <person name="Masignani V."/>
            <person name="Pizza M."/>
            <person name="Grandi G."/>
            <person name="Sun L."/>
            <person name="Smith H.O."/>
            <person name="Fraser C.M."/>
            <person name="Moxon E.R."/>
            <person name="Rappuoli R."/>
            <person name="Venter J.C."/>
        </authorList>
    </citation>
    <scope>NUCLEOTIDE SEQUENCE [LARGE SCALE GENOMIC DNA]</scope>
    <source>
        <strain>ATCC BAA-335 / MC58</strain>
    </source>
</reference>